<keyword id="KW-0001">2Fe-2S</keyword>
<keyword id="KW-0004">4Fe-4S</keyword>
<keyword id="KW-0093">Biotin biosynthesis</keyword>
<keyword id="KW-0408">Iron</keyword>
<keyword id="KW-0411">Iron-sulfur</keyword>
<keyword id="KW-0479">Metal-binding</keyword>
<keyword id="KW-0949">S-adenosyl-L-methionine</keyword>
<keyword id="KW-0808">Transferase</keyword>
<name>BIOB_PROM9</name>
<sequence length="335" mass="37674">MPNSNNQLLKEIRFDWNKEEILEILDMPLIDLMWESQTVHRKFNKYNIQLASLFSVKTGGCEENCSYCSQSIYSASEIKSHPQFQVEEVMARAKIAKNEGADRFCMGWAWREIRDGKSFNAMLEMVSGVRDLGMEACVTAGMLTEEQASRLADAGLTAYNHNLDTSPEHYKNIITTRTYQDRLDTIKRVRNAGINVCCGGIIGLGETNGDRASLLEVLSNMNPHPESVPINSLVAIEGTGLEDNQEIDSIEMIRMIATARILMPKSKIRLSAGREKLSKEAQILCFQCGANSIFYGDELLTTSNPSFQSDRKLLKEVGVSFNKDFETREKTLFSL</sequence>
<accession>Q31AD2</accession>
<gene>
    <name evidence="1" type="primary">bioB</name>
    <name type="ordered locus">PMT9312_1104</name>
</gene>
<comment type="function">
    <text evidence="1">Catalyzes the conversion of dethiobiotin (DTB) to biotin by the insertion of a sulfur atom into dethiobiotin via a radical-based mechanism.</text>
</comment>
<comment type="catalytic activity">
    <reaction evidence="1">
        <text>(4R,5S)-dethiobiotin + (sulfur carrier)-SH + 2 reduced [2Fe-2S]-[ferredoxin] + 2 S-adenosyl-L-methionine = (sulfur carrier)-H + biotin + 2 5'-deoxyadenosine + 2 L-methionine + 2 oxidized [2Fe-2S]-[ferredoxin]</text>
        <dbReference type="Rhea" id="RHEA:22060"/>
        <dbReference type="Rhea" id="RHEA-COMP:10000"/>
        <dbReference type="Rhea" id="RHEA-COMP:10001"/>
        <dbReference type="Rhea" id="RHEA-COMP:14737"/>
        <dbReference type="Rhea" id="RHEA-COMP:14739"/>
        <dbReference type="ChEBI" id="CHEBI:17319"/>
        <dbReference type="ChEBI" id="CHEBI:29917"/>
        <dbReference type="ChEBI" id="CHEBI:33737"/>
        <dbReference type="ChEBI" id="CHEBI:33738"/>
        <dbReference type="ChEBI" id="CHEBI:57586"/>
        <dbReference type="ChEBI" id="CHEBI:57844"/>
        <dbReference type="ChEBI" id="CHEBI:59789"/>
        <dbReference type="ChEBI" id="CHEBI:64428"/>
        <dbReference type="ChEBI" id="CHEBI:149473"/>
        <dbReference type="EC" id="2.8.1.6"/>
    </reaction>
</comment>
<comment type="cofactor">
    <cofactor evidence="1">
        <name>[4Fe-4S] cluster</name>
        <dbReference type="ChEBI" id="CHEBI:49883"/>
    </cofactor>
    <text evidence="1">Binds 1 [4Fe-4S] cluster. The cluster is coordinated with 3 cysteines and an exchangeable S-adenosyl-L-methionine.</text>
</comment>
<comment type="cofactor">
    <cofactor evidence="1">
        <name>[2Fe-2S] cluster</name>
        <dbReference type="ChEBI" id="CHEBI:190135"/>
    </cofactor>
    <text evidence="1">Binds 1 [2Fe-2S] cluster. The cluster is coordinated with 3 cysteines and 1 arginine.</text>
</comment>
<comment type="pathway">
    <text evidence="1">Cofactor biosynthesis; biotin biosynthesis; biotin from 7,8-diaminononanoate: step 2/2.</text>
</comment>
<comment type="subunit">
    <text evidence="1">Homodimer.</text>
</comment>
<comment type="similarity">
    <text evidence="1">Belongs to the radical SAM superfamily. Biotin synthase family.</text>
</comment>
<organism>
    <name type="scientific">Prochlorococcus marinus (strain MIT 9312)</name>
    <dbReference type="NCBI Taxonomy" id="74546"/>
    <lineage>
        <taxon>Bacteria</taxon>
        <taxon>Bacillati</taxon>
        <taxon>Cyanobacteriota</taxon>
        <taxon>Cyanophyceae</taxon>
        <taxon>Synechococcales</taxon>
        <taxon>Prochlorococcaceae</taxon>
        <taxon>Prochlorococcus</taxon>
    </lineage>
</organism>
<protein>
    <recommendedName>
        <fullName evidence="1">Biotin synthase</fullName>
        <ecNumber evidence="1">2.8.1.6</ecNumber>
    </recommendedName>
</protein>
<reference key="1">
    <citation type="journal article" date="2006" name="Science">
        <title>Genomic islands and the ecology and evolution of Prochlorococcus.</title>
        <authorList>
            <person name="Coleman M.L."/>
            <person name="Sullivan M.B."/>
            <person name="Martiny A.C."/>
            <person name="Steglich C."/>
            <person name="Barry K."/>
            <person name="Delong E.F."/>
            <person name="Chisholm S.W."/>
        </authorList>
    </citation>
    <scope>NUCLEOTIDE SEQUENCE [LARGE SCALE GENOMIC DNA]</scope>
    <source>
        <strain>MIT 9312</strain>
    </source>
</reference>
<evidence type="ECO:0000255" key="1">
    <source>
        <dbReference type="HAMAP-Rule" id="MF_01694"/>
    </source>
</evidence>
<evidence type="ECO:0000255" key="2">
    <source>
        <dbReference type="PROSITE-ProRule" id="PRU01266"/>
    </source>
</evidence>
<feature type="chain" id="PRO_0000381542" description="Biotin synthase">
    <location>
        <begin position="1"/>
        <end position="335"/>
    </location>
</feature>
<feature type="domain" description="Radical SAM core" evidence="2">
    <location>
        <begin position="46"/>
        <end position="274"/>
    </location>
</feature>
<feature type="binding site" evidence="1">
    <location>
        <position position="61"/>
    </location>
    <ligand>
        <name>[4Fe-4S] cluster</name>
        <dbReference type="ChEBI" id="CHEBI:49883"/>
        <note>4Fe-4S-S-AdoMet</note>
    </ligand>
</feature>
<feature type="binding site" evidence="1">
    <location>
        <position position="65"/>
    </location>
    <ligand>
        <name>[4Fe-4S] cluster</name>
        <dbReference type="ChEBI" id="CHEBI:49883"/>
        <note>4Fe-4S-S-AdoMet</note>
    </ligand>
</feature>
<feature type="binding site" evidence="1">
    <location>
        <position position="68"/>
    </location>
    <ligand>
        <name>[4Fe-4S] cluster</name>
        <dbReference type="ChEBI" id="CHEBI:49883"/>
        <note>4Fe-4S-S-AdoMet</note>
    </ligand>
</feature>
<feature type="binding site" evidence="1">
    <location>
        <position position="105"/>
    </location>
    <ligand>
        <name>[2Fe-2S] cluster</name>
        <dbReference type="ChEBI" id="CHEBI:190135"/>
    </ligand>
</feature>
<feature type="binding site" evidence="1">
    <location>
        <position position="137"/>
    </location>
    <ligand>
        <name>[2Fe-2S] cluster</name>
        <dbReference type="ChEBI" id="CHEBI:190135"/>
    </ligand>
</feature>
<feature type="binding site" evidence="1">
    <location>
        <position position="197"/>
    </location>
    <ligand>
        <name>[2Fe-2S] cluster</name>
        <dbReference type="ChEBI" id="CHEBI:190135"/>
    </ligand>
</feature>
<feature type="binding site" evidence="1">
    <location>
        <position position="269"/>
    </location>
    <ligand>
        <name>[2Fe-2S] cluster</name>
        <dbReference type="ChEBI" id="CHEBI:190135"/>
    </ligand>
</feature>
<dbReference type="EC" id="2.8.1.6" evidence="1"/>
<dbReference type="EMBL" id="CP000111">
    <property type="protein sequence ID" value="ABB50163.1"/>
    <property type="molecule type" value="Genomic_DNA"/>
</dbReference>
<dbReference type="RefSeq" id="WP_011376654.1">
    <property type="nucleotide sequence ID" value="NC_007577.1"/>
</dbReference>
<dbReference type="SMR" id="Q31AD2"/>
<dbReference type="STRING" id="74546.PMT9312_1104"/>
<dbReference type="KEGG" id="pmi:PMT9312_1104"/>
<dbReference type="eggNOG" id="COG0502">
    <property type="taxonomic scope" value="Bacteria"/>
</dbReference>
<dbReference type="HOGENOM" id="CLU_033172_1_2_3"/>
<dbReference type="OrthoDB" id="9786826at2"/>
<dbReference type="UniPathway" id="UPA00078">
    <property type="reaction ID" value="UER00162"/>
</dbReference>
<dbReference type="Proteomes" id="UP000002715">
    <property type="component" value="Chromosome"/>
</dbReference>
<dbReference type="GO" id="GO:0051537">
    <property type="term" value="F:2 iron, 2 sulfur cluster binding"/>
    <property type="evidence" value="ECO:0007669"/>
    <property type="project" value="UniProtKB-KW"/>
</dbReference>
<dbReference type="GO" id="GO:0051539">
    <property type="term" value="F:4 iron, 4 sulfur cluster binding"/>
    <property type="evidence" value="ECO:0007669"/>
    <property type="project" value="UniProtKB-KW"/>
</dbReference>
<dbReference type="GO" id="GO:0004076">
    <property type="term" value="F:biotin synthase activity"/>
    <property type="evidence" value="ECO:0007669"/>
    <property type="project" value="UniProtKB-UniRule"/>
</dbReference>
<dbReference type="GO" id="GO:0005506">
    <property type="term" value="F:iron ion binding"/>
    <property type="evidence" value="ECO:0007669"/>
    <property type="project" value="UniProtKB-UniRule"/>
</dbReference>
<dbReference type="GO" id="GO:0009102">
    <property type="term" value="P:biotin biosynthetic process"/>
    <property type="evidence" value="ECO:0007669"/>
    <property type="project" value="UniProtKB-UniRule"/>
</dbReference>
<dbReference type="CDD" id="cd01335">
    <property type="entry name" value="Radical_SAM"/>
    <property type="match status" value="1"/>
</dbReference>
<dbReference type="Gene3D" id="3.20.20.70">
    <property type="entry name" value="Aldolase class I"/>
    <property type="match status" value="1"/>
</dbReference>
<dbReference type="HAMAP" id="MF_01694">
    <property type="entry name" value="BioB"/>
    <property type="match status" value="1"/>
</dbReference>
<dbReference type="InterPro" id="IPR013785">
    <property type="entry name" value="Aldolase_TIM"/>
</dbReference>
<dbReference type="InterPro" id="IPR010722">
    <property type="entry name" value="BATS_dom"/>
</dbReference>
<dbReference type="InterPro" id="IPR002684">
    <property type="entry name" value="Biotin_synth/BioAB"/>
</dbReference>
<dbReference type="InterPro" id="IPR024177">
    <property type="entry name" value="Biotin_synthase"/>
</dbReference>
<dbReference type="InterPro" id="IPR006638">
    <property type="entry name" value="Elp3/MiaA/NifB-like_rSAM"/>
</dbReference>
<dbReference type="InterPro" id="IPR007197">
    <property type="entry name" value="rSAM"/>
</dbReference>
<dbReference type="NCBIfam" id="TIGR00433">
    <property type="entry name" value="bioB"/>
    <property type="match status" value="1"/>
</dbReference>
<dbReference type="PANTHER" id="PTHR22976">
    <property type="entry name" value="BIOTIN SYNTHASE"/>
    <property type="match status" value="1"/>
</dbReference>
<dbReference type="PANTHER" id="PTHR22976:SF2">
    <property type="entry name" value="BIOTIN SYNTHASE, MITOCHONDRIAL"/>
    <property type="match status" value="1"/>
</dbReference>
<dbReference type="Pfam" id="PF06968">
    <property type="entry name" value="BATS"/>
    <property type="match status" value="1"/>
</dbReference>
<dbReference type="Pfam" id="PF04055">
    <property type="entry name" value="Radical_SAM"/>
    <property type="match status" value="1"/>
</dbReference>
<dbReference type="PIRSF" id="PIRSF001619">
    <property type="entry name" value="Biotin_synth"/>
    <property type="match status" value="1"/>
</dbReference>
<dbReference type="SFLD" id="SFLDG01060">
    <property type="entry name" value="BATS_domain_containing"/>
    <property type="match status" value="1"/>
</dbReference>
<dbReference type="SFLD" id="SFLDF00272">
    <property type="entry name" value="biotin_synthase"/>
    <property type="match status" value="1"/>
</dbReference>
<dbReference type="SMART" id="SM00876">
    <property type="entry name" value="BATS"/>
    <property type="match status" value="1"/>
</dbReference>
<dbReference type="SMART" id="SM00729">
    <property type="entry name" value="Elp3"/>
    <property type="match status" value="1"/>
</dbReference>
<dbReference type="SUPFAM" id="SSF102114">
    <property type="entry name" value="Radical SAM enzymes"/>
    <property type="match status" value="1"/>
</dbReference>
<dbReference type="PROSITE" id="PS51918">
    <property type="entry name" value="RADICAL_SAM"/>
    <property type="match status" value="1"/>
</dbReference>
<proteinExistence type="inferred from homology"/>